<proteinExistence type="inferred from homology"/>
<name>FTHS_STRA1</name>
<feature type="chain" id="PRO_0000300546" description="Formate--tetrahydrofolate ligase">
    <location>
        <begin position="1"/>
        <end position="556"/>
    </location>
</feature>
<feature type="binding site" evidence="1">
    <location>
        <begin position="65"/>
        <end position="72"/>
    </location>
    <ligand>
        <name>ATP</name>
        <dbReference type="ChEBI" id="CHEBI:30616"/>
    </ligand>
</feature>
<sequence length="556" mass="59886">MKTDIEIAQSVALKPIAEIVEQVGIGFDDIELYGKYKAKLSFDKIEAVRSQKVGKLILVTAINPTPAGEGKSTMSIGLADALNKIGKKTMIALREPSLGPVMGIKGGAAGGGYAQVLPMEDINLHFTGDMHAITTANNALSALLDNHIHQGNELDIDQRRVIWKRVVDLNDRALRQVIVGLGSPVNGIPREDGFDITVASEIMAILCLATDLSDLKKRLSNIVVAYSRDRKPIYVKDLKIEGALTLILKDAIKPNLVQTIYGTPALVHGGPFANIAHGCNSVLATSTALRLADYVVTEAGFGADLGAEKFLDIKTPNLPTSPDAIVIVATLRALKMHGGVSKEDLSQENVEAVKRGFTNLERHVNNMRQYGVPVVVAINQFTADTESEIATLKTLCSNIDVAVELASVWEDGADGGLELAQTVANVIETQSSNYKRLYNDADTIEEKIKKIVTKIYGGNKVHFGPKAQIQLKEFSDNGWDKMPICMAKTQYSFSDNPNLLGAPTDFDITVREFVPKTGAGFIVALTGDVLTMPGLPKKPAALNMDVLEDGTAIGLF</sequence>
<keyword id="KW-0067">ATP-binding</keyword>
<keyword id="KW-0436">Ligase</keyword>
<keyword id="KW-0547">Nucleotide-binding</keyword>
<keyword id="KW-0554">One-carbon metabolism</keyword>
<gene>
    <name evidence="1" type="primary">fhs</name>
    <name type="ordered locus">SAK_1144</name>
</gene>
<organism>
    <name type="scientific">Streptococcus agalactiae serotype Ia (strain ATCC 27591 / A909 / CDC SS700)</name>
    <dbReference type="NCBI Taxonomy" id="205921"/>
    <lineage>
        <taxon>Bacteria</taxon>
        <taxon>Bacillati</taxon>
        <taxon>Bacillota</taxon>
        <taxon>Bacilli</taxon>
        <taxon>Lactobacillales</taxon>
        <taxon>Streptococcaceae</taxon>
        <taxon>Streptococcus</taxon>
    </lineage>
</organism>
<protein>
    <recommendedName>
        <fullName evidence="1">Formate--tetrahydrofolate ligase</fullName>
        <ecNumber evidence="1">6.3.4.3</ecNumber>
    </recommendedName>
    <alternativeName>
        <fullName evidence="1">Formyltetrahydrofolate synthetase</fullName>
        <shortName evidence="1">FHS</shortName>
        <shortName evidence="1">FTHFS</shortName>
    </alternativeName>
</protein>
<comment type="catalytic activity">
    <reaction evidence="1">
        <text>(6S)-5,6,7,8-tetrahydrofolate + formate + ATP = (6R)-10-formyltetrahydrofolate + ADP + phosphate</text>
        <dbReference type="Rhea" id="RHEA:20221"/>
        <dbReference type="ChEBI" id="CHEBI:15740"/>
        <dbReference type="ChEBI" id="CHEBI:30616"/>
        <dbReference type="ChEBI" id="CHEBI:43474"/>
        <dbReference type="ChEBI" id="CHEBI:57453"/>
        <dbReference type="ChEBI" id="CHEBI:195366"/>
        <dbReference type="ChEBI" id="CHEBI:456216"/>
        <dbReference type="EC" id="6.3.4.3"/>
    </reaction>
</comment>
<comment type="pathway">
    <text evidence="1">One-carbon metabolism; tetrahydrofolate interconversion.</text>
</comment>
<comment type="similarity">
    <text evidence="1">Belongs to the formate--tetrahydrofolate ligase family.</text>
</comment>
<reference key="1">
    <citation type="journal article" date="2005" name="Proc. Natl. Acad. Sci. U.S.A.">
        <title>Genome analysis of multiple pathogenic isolates of Streptococcus agalactiae: implications for the microbial 'pan-genome'.</title>
        <authorList>
            <person name="Tettelin H."/>
            <person name="Masignani V."/>
            <person name="Cieslewicz M.J."/>
            <person name="Donati C."/>
            <person name="Medini D."/>
            <person name="Ward N.L."/>
            <person name="Angiuoli S.V."/>
            <person name="Crabtree J."/>
            <person name="Jones A.L."/>
            <person name="Durkin A.S."/>
            <person name="DeBoy R.T."/>
            <person name="Davidsen T.M."/>
            <person name="Mora M."/>
            <person name="Scarselli M."/>
            <person name="Margarit y Ros I."/>
            <person name="Peterson J.D."/>
            <person name="Hauser C.R."/>
            <person name="Sundaram J.P."/>
            <person name="Nelson W.C."/>
            <person name="Madupu R."/>
            <person name="Brinkac L.M."/>
            <person name="Dodson R.J."/>
            <person name="Rosovitz M.J."/>
            <person name="Sullivan S.A."/>
            <person name="Daugherty S.C."/>
            <person name="Haft D.H."/>
            <person name="Selengut J."/>
            <person name="Gwinn M.L."/>
            <person name="Zhou L."/>
            <person name="Zafar N."/>
            <person name="Khouri H."/>
            <person name="Radune D."/>
            <person name="Dimitrov G."/>
            <person name="Watkins K."/>
            <person name="O'Connor K.J."/>
            <person name="Smith S."/>
            <person name="Utterback T.R."/>
            <person name="White O."/>
            <person name="Rubens C.E."/>
            <person name="Grandi G."/>
            <person name="Madoff L.C."/>
            <person name="Kasper D.L."/>
            <person name="Telford J.L."/>
            <person name="Wessels M.R."/>
            <person name="Rappuoli R."/>
            <person name="Fraser C.M."/>
        </authorList>
    </citation>
    <scope>NUCLEOTIDE SEQUENCE [LARGE SCALE GENOMIC DNA]</scope>
    <source>
        <strain>ATCC 27591 / A909 / CDC SS700</strain>
    </source>
</reference>
<evidence type="ECO:0000255" key="1">
    <source>
        <dbReference type="HAMAP-Rule" id="MF_01543"/>
    </source>
</evidence>
<dbReference type="EC" id="6.3.4.3" evidence="1"/>
<dbReference type="EMBL" id="CP000114">
    <property type="protein sequence ID" value="ABA44625.1"/>
    <property type="molecule type" value="Genomic_DNA"/>
</dbReference>
<dbReference type="RefSeq" id="WP_000845309.1">
    <property type="nucleotide sequence ID" value="NC_007432.1"/>
</dbReference>
<dbReference type="SMR" id="Q3K138"/>
<dbReference type="KEGG" id="sak:SAK_1144"/>
<dbReference type="HOGENOM" id="CLU_003601_3_3_9"/>
<dbReference type="UniPathway" id="UPA00193"/>
<dbReference type="GO" id="GO:0005524">
    <property type="term" value="F:ATP binding"/>
    <property type="evidence" value="ECO:0007669"/>
    <property type="project" value="UniProtKB-UniRule"/>
</dbReference>
<dbReference type="GO" id="GO:0004329">
    <property type="term" value="F:formate-tetrahydrofolate ligase activity"/>
    <property type="evidence" value="ECO:0007669"/>
    <property type="project" value="UniProtKB-UniRule"/>
</dbReference>
<dbReference type="GO" id="GO:0035999">
    <property type="term" value="P:tetrahydrofolate interconversion"/>
    <property type="evidence" value="ECO:0007669"/>
    <property type="project" value="UniProtKB-UniRule"/>
</dbReference>
<dbReference type="CDD" id="cd00477">
    <property type="entry name" value="FTHFS"/>
    <property type="match status" value="1"/>
</dbReference>
<dbReference type="FunFam" id="3.30.1510.10:FF:000001">
    <property type="entry name" value="Formate--tetrahydrofolate ligase"/>
    <property type="match status" value="1"/>
</dbReference>
<dbReference type="FunFam" id="3.10.410.10:FF:000001">
    <property type="entry name" value="Putative formate--tetrahydrofolate ligase"/>
    <property type="match status" value="1"/>
</dbReference>
<dbReference type="Gene3D" id="3.30.1510.10">
    <property type="entry name" value="Domain 2, N(10)-formyltetrahydrofolate synthetase"/>
    <property type="match status" value="1"/>
</dbReference>
<dbReference type="Gene3D" id="3.10.410.10">
    <property type="entry name" value="Formyltetrahydrofolate synthetase, domain 3"/>
    <property type="match status" value="1"/>
</dbReference>
<dbReference type="Gene3D" id="3.40.50.300">
    <property type="entry name" value="P-loop containing nucleotide triphosphate hydrolases"/>
    <property type="match status" value="1"/>
</dbReference>
<dbReference type="HAMAP" id="MF_01543">
    <property type="entry name" value="FTHFS"/>
    <property type="match status" value="1"/>
</dbReference>
<dbReference type="InterPro" id="IPR000559">
    <property type="entry name" value="Formate_THF_ligase"/>
</dbReference>
<dbReference type="InterPro" id="IPR020628">
    <property type="entry name" value="Formate_THF_ligase_CS"/>
</dbReference>
<dbReference type="InterPro" id="IPR027417">
    <property type="entry name" value="P-loop_NTPase"/>
</dbReference>
<dbReference type="NCBIfam" id="NF010030">
    <property type="entry name" value="PRK13505.1"/>
    <property type="match status" value="1"/>
</dbReference>
<dbReference type="Pfam" id="PF01268">
    <property type="entry name" value="FTHFS"/>
    <property type="match status" value="1"/>
</dbReference>
<dbReference type="SUPFAM" id="SSF52540">
    <property type="entry name" value="P-loop containing nucleoside triphosphate hydrolases"/>
    <property type="match status" value="1"/>
</dbReference>
<dbReference type="PROSITE" id="PS00721">
    <property type="entry name" value="FTHFS_1"/>
    <property type="match status" value="1"/>
</dbReference>
<dbReference type="PROSITE" id="PS00722">
    <property type="entry name" value="FTHFS_2"/>
    <property type="match status" value="1"/>
</dbReference>
<accession>Q3K138</accession>